<feature type="initiator methionine" description="Removed" evidence="3">
    <location>
        <position position="1"/>
    </location>
</feature>
<feature type="chain" id="PRO_0000073803" description="Guanylyl cyclase-activating protein 1">
    <location>
        <begin position="2"/>
        <end position="201"/>
    </location>
</feature>
<feature type="domain" description="EF-hand 1" evidence="4">
    <location>
        <begin position="31"/>
        <end position="49"/>
    </location>
</feature>
<feature type="domain" description="EF-hand 2" evidence="4">
    <location>
        <begin position="51"/>
        <end position="86"/>
    </location>
</feature>
<feature type="domain" description="EF-hand 3" evidence="4">
    <location>
        <begin position="87"/>
        <end position="122"/>
    </location>
</feature>
<feature type="domain" description="EF-hand 4" evidence="4">
    <location>
        <begin position="131"/>
        <end position="166"/>
    </location>
</feature>
<feature type="binding site" evidence="4">
    <location>
        <position position="64"/>
    </location>
    <ligand>
        <name>Ca(2+)</name>
        <dbReference type="ChEBI" id="CHEBI:29108"/>
        <label>1</label>
    </ligand>
</feature>
<feature type="binding site" evidence="4">
    <location>
        <position position="66"/>
    </location>
    <ligand>
        <name>Ca(2+)</name>
        <dbReference type="ChEBI" id="CHEBI:29108"/>
        <label>1</label>
    </ligand>
</feature>
<feature type="binding site" evidence="4">
    <location>
        <position position="68"/>
    </location>
    <ligand>
        <name>Ca(2+)</name>
        <dbReference type="ChEBI" id="CHEBI:29108"/>
        <label>1</label>
    </ligand>
</feature>
<feature type="binding site" evidence="4">
    <location>
        <position position="70"/>
    </location>
    <ligand>
        <name>Ca(2+)</name>
        <dbReference type="ChEBI" id="CHEBI:29108"/>
        <label>1</label>
    </ligand>
</feature>
<feature type="binding site" evidence="4">
    <location>
        <position position="75"/>
    </location>
    <ligand>
        <name>Ca(2+)</name>
        <dbReference type="ChEBI" id="CHEBI:29108"/>
        <label>1</label>
    </ligand>
</feature>
<feature type="binding site" evidence="4">
    <location>
        <position position="100"/>
    </location>
    <ligand>
        <name>Ca(2+)</name>
        <dbReference type="ChEBI" id="CHEBI:29108"/>
        <label>2</label>
    </ligand>
</feature>
<feature type="binding site" evidence="4">
    <location>
        <position position="102"/>
    </location>
    <ligand>
        <name>Ca(2+)</name>
        <dbReference type="ChEBI" id="CHEBI:29108"/>
        <label>2</label>
    </ligand>
</feature>
<feature type="binding site" evidence="4">
    <location>
        <position position="104"/>
    </location>
    <ligand>
        <name>Ca(2+)</name>
        <dbReference type="ChEBI" id="CHEBI:29108"/>
        <label>2</label>
    </ligand>
</feature>
<feature type="binding site" evidence="4">
    <location>
        <position position="106"/>
    </location>
    <ligand>
        <name>Ca(2+)</name>
        <dbReference type="ChEBI" id="CHEBI:29108"/>
        <label>2</label>
    </ligand>
</feature>
<feature type="binding site" evidence="4">
    <location>
        <position position="111"/>
    </location>
    <ligand>
        <name>Ca(2+)</name>
        <dbReference type="ChEBI" id="CHEBI:29108"/>
        <label>2</label>
    </ligand>
</feature>
<feature type="binding site" evidence="4">
    <location>
        <position position="144"/>
    </location>
    <ligand>
        <name>Ca(2+)</name>
        <dbReference type="ChEBI" id="CHEBI:29108"/>
        <label>3</label>
    </ligand>
</feature>
<feature type="binding site" evidence="4">
    <location>
        <position position="146"/>
    </location>
    <ligand>
        <name>Ca(2+)</name>
        <dbReference type="ChEBI" id="CHEBI:29108"/>
        <label>3</label>
    </ligand>
</feature>
<feature type="binding site" evidence="4">
    <location>
        <position position="148"/>
    </location>
    <ligand>
        <name>Ca(2+)</name>
        <dbReference type="ChEBI" id="CHEBI:29108"/>
        <label>3</label>
    </ligand>
</feature>
<feature type="binding site" evidence="4">
    <location>
        <position position="150"/>
    </location>
    <ligand>
        <name>Ca(2+)</name>
        <dbReference type="ChEBI" id="CHEBI:29108"/>
        <label>3</label>
    </ligand>
</feature>
<feature type="binding site" evidence="4">
    <location>
        <position position="155"/>
    </location>
    <ligand>
        <name>Ca(2+)</name>
        <dbReference type="ChEBI" id="CHEBI:29108"/>
        <label>3</label>
    </ligand>
</feature>
<feature type="modified residue" description="Deamidated asparagine" evidence="3">
    <location>
        <position position="3"/>
    </location>
</feature>
<feature type="lipid moiety-binding region" description="N-myristoyl glycine" evidence="2">
    <location>
        <position position="2"/>
    </location>
</feature>
<feature type="sequence variant" id="VAR_083669" description="In COD3; likely benign; dbSNP:rs202098005." evidence="21">
    <original>F</original>
    <variation>I</variation>
    <location>
        <position position="42"/>
    </location>
</feature>
<feature type="sequence variant" id="VAR_010648" description="In COD3; uncertain significance; some subjects may present a moderately severe cone-rod dystrophy; causes a decrease in the number of bound calcium ions from 3 to 2, without changing the activity profile; dbSNP:rs104893968." evidence="5 6">
    <original>P</original>
    <variation>L</variation>
    <location>
        <position position="50"/>
    </location>
</feature>
<feature type="sequence variant" id="VAR_083670" description="In COD3; uncertain significance; dbSNP:rs776251040." evidence="21">
    <original>D</original>
    <variation>E</variation>
    <location>
        <position position="68"/>
    </location>
</feature>
<feature type="sequence variant" id="VAR_083671" description="In COD3; uncertain significance; dbSNP:rs904381536." evidence="21">
    <original>L</original>
    <variation>I</variation>
    <location>
        <position position="80"/>
    </location>
</feature>
<feature type="sequence variant" id="VAR_083672" description="In CORD14; affects guanylate cyclase regulator activity resulting in constitutive activation of GUCY2D at physiologic calcium concentrations; altered tertiary structure; no change of affinity for calcium ions; increased affinity for magnesium ions; dbSNP:rs869320709." evidence="13 15">
    <original>L</original>
    <variation>F</variation>
    <location>
        <position position="84"/>
    </location>
</feature>
<feature type="sequence variant" id="VAR_083673" description="In CORD14; results in impaired guanylate cyclase regulator activity; interferes with GCAP1 calcium-dependent transition from activator to inhibitor of GUCY2D; the mutant protein remains active at high calcium concentrations causing persistent GUCY2D stimulation; dbSNP:rs1768014561." evidence="20 22">
    <original>G</original>
    <variation>R</variation>
    <location>
        <position position="86"/>
    </location>
</feature>
<feature type="sequence variant" id="VAR_060802" description="In COD3; exhibits an about 6-fold shift of ionic calcium concentration at which the guanylate cyclase activity is halfmaximal; dbSNP:rs1768015203." evidence="12">
    <original>E</original>
    <variation>K</variation>
    <location>
        <position position="89"/>
    </location>
</feature>
<feature type="sequence variant" id="VAR_001372" description="In COD3; results in impaired guanylate cyclase regulator activity; at high calcium ion concentrations the mutant protein stimulates GUCY2D activity while the wild-type inhibits it; dbSNP:rs104893967." evidence="5 6 24">
    <original>Y</original>
    <variation>C</variation>
    <location>
        <position position="99"/>
    </location>
</feature>
<feature type="sequence variant" id="VAR_083674" description="In COD3; dbSNP:rs1768016404." evidence="21">
    <original>Y</original>
    <variation>N</variation>
    <location>
        <position position="99"/>
    </location>
</feature>
<feature type="sequence variant" id="VAR_083675" description="In COD3; dbSNP:rs104893967." evidence="21">
    <original>Y</original>
    <variation>S</variation>
    <location>
        <position position="99"/>
    </location>
</feature>
<feature type="sequence variant" id="VAR_060803" description="In COD3; exhibits an about 28-fold shift of ionic calcium concentration at which the guanylate cyclase activity is halfmaximal; dbSNP:rs1319646518." evidence="12">
    <original>D</original>
    <variation>E</variation>
    <location>
        <position position="100"/>
    </location>
</feature>
<feature type="sequence variant" id="VAR_083676" description="In CORD14; dbSNP:rs1768016995." evidence="14">
    <original>D</original>
    <variation>G</variation>
    <location>
        <position position="100"/>
    </location>
</feature>
<feature type="sequence variant" id="VAR_083677" description="Found in a family with autosomal dominant macular dystrophy; uncertain significance." evidence="18">
    <location>
        <position position="101"/>
    </location>
</feature>
<feature type="sequence variant" id="VAR_083678" description="In COD3; results in impaired guanylate cyclase regulator activity; at low calcium concentrations the mutant protein stimulates GUCY2D less efficiently than the wild-type but it remains active at high calcium concentrations causing persistent GUCY2D stimulation; dbSNP:rs749013749." evidence="11">
    <original>N</original>
    <variation>K</variation>
    <location>
        <position position="104"/>
    </location>
</feature>
<feature type="sequence variant" id="VAR_083679" description="In CORD14; affects guanylate cyclase regulator activity resulting in constitutive activation of GUCY2D at physiologic calcium concentrations; 10-fold lower affinity for calcium ions; dbSNP:rs869320710." evidence="13 15">
    <original>I</original>
    <variation>T</variation>
    <location>
        <position position="107"/>
    </location>
</feature>
<feature type="sequence variant" id="VAR_083680" description="In CORD14; results in impaired guanylate cyclase regulator activity; at low calcium concentrations the mutant protein stimulates GUCY2D as the wild-type while at high calcium concentrations it does not fully inhibit GUCY2D; decreased affinity for calcium ions; dbSNP:rs1554186385." evidence="19">
    <original>E</original>
    <variation>V</variation>
    <location>
        <position position="111"/>
    </location>
</feature>
<feature type="sequence variant" id="VAR_060804" description="In a patient with an atypical form of retinitis pigmentosa; uncertain significance; dbSNP:rs771261841." evidence="8">
    <original>T</original>
    <variation>I</variation>
    <location>
        <position position="114"/>
    </location>
</feature>
<feature type="sequence variant" id="VAR_083681" description="In COD3; dbSNP:rs1582323732." evidence="17">
    <original>R</original>
    <variation>L</variation>
    <location>
        <position position="120"/>
    </location>
</feature>
<feature type="sequence variant" id="VAR_060805" description="In COD3." evidence="8">
    <original>I</original>
    <variation>NT</variation>
    <location>
        <position position="143"/>
    </location>
</feature>
<feature type="sequence variant" id="VAR_083682" description="In COD3; results in impaired guanylate cyclase regulator activity leading to increased GUCY2D activity; dbSNP:rs1768035083." evidence="23">
    <original>D</original>
    <variation>G</variation>
    <location>
        <position position="144"/>
    </location>
</feature>
<feature type="sequence variant" id="VAR_083683" description="In COD3; uncertain significance; dbSNP:rs1768036096." evidence="18">
    <original>D</original>
    <variation>E</variation>
    <location>
        <position position="148"/>
    </location>
</feature>
<feature type="sequence variant" id="VAR_060806" description="In COD3 and CORD14; dbSNP:rs121434631." evidence="9 10 12 21">
    <original>L</original>
    <variation>F</variation>
    <location>
        <position position="151"/>
    </location>
</feature>
<feature type="sequence variant" id="VAR_012987" description="In COD3; constitutive activation of GUCY2D; dbSNP:rs1768050305." evidence="7">
    <original>E</original>
    <variation>G</variation>
    <location>
        <position position="155"/>
    </location>
</feature>
<feature type="sequence variant" id="VAR_060807" description="In COD3; exhibits an about 18-fold shift of ionic calcium concentration at which the guanylate cyclase activity is halfmaximal." evidence="12">
    <original>G</original>
    <variation>V</variation>
    <location>
        <position position="159"/>
    </location>
</feature>
<feature type="sequence variant" id="VAR_083684" description="Found in autosomal dominant macular dystrophy; uncertain significance; affects guanylate cyclase regulator activity resulting in a constitutively active form at physiologic calcium concentrations; no change of affinity for calcium ions; increased affinity for magnesium ions; dbSNP:rs794727777." evidence="16">
    <original>L</original>
    <variation>F</variation>
    <location>
        <position position="176"/>
    </location>
</feature>
<feature type="sequence variant" id="VAR_083685" description="In COD3; likely benign; dbSNP:rs149998844." evidence="21">
    <original>Q</original>
    <variation>R</variation>
    <location>
        <position position="184"/>
    </location>
</feature>
<feature type="sequence conflict" description="In Ref. 1; AAA60541/AAA60542." evidence="26" ref="1">
    <original>A</original>
    <variation>G</variation>
    <location>
        <position position="79"/>
    </location>
</feature>
<gene>
    <name type="primary">GUCA1A</name>
    <name type="synonym">C6orf131</name>
    <name type="synonym">GCAP</name>
    <name type="synonym">GCAP1</name>
    <name type="synonym">GUCA1</name>
</gene>
<proteinExistence type="evidence at protein level"/>
<dbReference type="EMBL" id="L36859">
    <property type="protein sequence ID" value="AAA60541.1"/>
    <property type="molecule type" value="mRNA"/>
</dbReference>
<dbReference type="EMBL" id="L36861">
    <property type="protein sequence ID" value="AAA60542.1"/>
    <property type="molecule type" value="Genomic_DNA"/>
</dbReference>
<dbReference type="EMBL" id="AK125780">
    <property type="protein sequence ID" value="BAG54246.1"/>
    <property type="molecule type" value="mRNA"/>
</dbReference>
<dbReference type="EMBL" id="AL096814">
    <property type="status" value="NOT_ANNOTATED_CDS"/>
    <property type="molecule type" value="Genomic_DNA"/>
</dbReference>
<dbReference type="EMBL" id="CH471081">
    <property type="protein sequence ID" value="EAX04084.1"/>
    <property type="molecule type" value="Genomic_DNA"/>
</dbReference>
<dbReference type="EMBL" id="BC031663">
    <property type="protein sequence ID" value="AAH31663.1"/>
    <property type="molecule type" value="mRNA"/>
</dbReference>
<dbReference type="CCDS" id="CCDS4864.1"/>
<dbReference type="PIR" id="C55331">
    <property type="entry name" value="C55331"/>
</dbReference>
<dbReference type="RefSeq" id="NP_000400.2">
    <property type="nucleotide sequence ID" value="NM_000409.4"/>
</dbReference>
<dbReference type="RefSeq" id="NP_001305990.1">
    <property type="nucleotide sequence ID" value="NM_001319061.1"/>
</dbReference>
<dbReference type="RefSeq" id="NP_001305991.1">
    <property type="nucleotide sequence ID" value="NM_001319062.1"/>
</dbReference>
<dbReference type="RefSeq" id="NP_001371839.1">
    <property type="nucleotide sequence ID" value="NM_001384910.1"/>
</dbReference>
<dbReference type="RefSeq" id="XP_011512839.1">
    <property type="nucleotide sequence ID" value="XM_011514537.2"/>
</dbReference>
<dbReference type="RefSeq" id="XP_011512841.1">
    <property type="nucleotide sequence ID" value="XM_011514539.1"/>
</dbReference>
<dbReference type="SMR" id="P43080"/>
<dbReference type="BioGRID" id="109233">
    <property type="interactions" value="8"/>
</dbReference>
<dbReference type="CORUM" id="P43080"/>
<dbReference type="FunCoup" id="P43080">
    <property type="interactions" value="31"/>
</dbReference>
<dbReference type="IntAct" id="P43080">
    <property type="interactions" value="8"/>
</dbReference>
<dbReference type="STRING" id="9606.ENSP00000053469"/>
<dbReference type="DrugBank" id="DB08231">
    <property type="generic name" value="Myristic acid"/>
</dbReference>
<dbReference type="BioMuta" id="GUCA1A"/>
<dbReference type="DMDM" id="46577585"/>
<dbReference type="MassIVE" id="P43080"/>
<dbReference type="PaxDb" id="9606-ENSP00000377784"/>
<dbReference type="PeptideAtlas" id="P43080"/>
<dbReference type="ProteomicsDB" id="55577"/>
<dbReference type="Antibodypedia" id="30136">
    <property type="antibodies" value="187 antibodies from 28 providers"/>
</dbReference>
<dbReference type="DNASU" id="2978"/>
<dbReference type="Ensembl" id="ENST00000372958.2">
    <property type="protein sequence ID" value="ENSP00000362049.1"/>
    <property type="gene ID" value="ENSG00000048545.18"/>
</dbReference>
<dbReference type="GeneID" id="118142757"/>
<dbReference type="GeneID" id="2978"/>
<dbReference type="KEGG" id="hsa:118142757"/>
<dbReference type="MANE-Select" id="ENST00000372958.2">
    <property type="protein sequence ID" value="ENSP00000362049.1"/>
    <property type="RefSeq nucleotide sequence ID" value="NM_001384910.1"/>
    <property type="RefSeq protein sequence ID" value="NP_001371839.1"/>
</dbReference>
<dbReference type="UCSC" id="uc003orx.4">
    <property type="organism name" value="human"/>
</dbReference>
<dbReference type="AGR" id="HGNC:4678"/>
<dbReference type="AGR" id="HGNC:56129"/>
<dbReference type="CTD" id="118142757"/>
<dbReference type="DisGeNET" id="118142757"/>
<dbReference type="DisGeNET" id="2978"/>
<dbReference type="GeneCards" id="GUCA1A"/>
<dbReference type="HGNC" id="HGNC:4678">
    <property type="gene designation" value="GUCA1A"/>
</dbReference>
<dbReference type="HPA" id="ENSG00000048545">
    <property type="expression patterns" value="Tissue enriched (retina)"/>
</dbReference>
<dbReference type="HPA" id="ENSG00000290147">
    <property type="expression patterns" value="Tissue enriched (retina)"/>
</dbReference>
<dbReference type="MalaCards" id="GUCA1A"/>
<dbReference type="MIM" id="600364">
    <property type="type" value="gene"/>
</dbReference>
<dbReference type="MIM" id="602093">
    <property type="type" value="phenotype"/>
</dbReference>
<dbReference type="neXtProt" id="NX_P43080"/>
<dbReference type="OpenTargets" id="ENSG00000048545"/>
<dbReference type="Orphanet" id="75377">
    <property type="disease" value="Central areolar choroidal dystrophy"/>
</dbReference>
<dbReference type="Orphanet" id="1872">
    <property type="disease" value="Cone rod dystrophy"/>
</dbReference>
<dbReference type="Orphanet" id="1871">
    <property type="disease" value="Progressive cone dystrophy"/>
</dbReference>
<dbReference type="PharmGKB" id="PA29062"/>
<dbReference type="VEuPathDB" id="HostDB:ENSG00000048545"/>
<dbReference type="eggNOG" id="KOG0044">
    <property type="taxonomic scope" value="Eukaryota"/>
</dbReference>
<dbReference type="GeneTree" id="ENSGT00940000160607"/>
<dbReference type="HOGENOM" id="CLU_072366_4_1_1"/>
<dbReference type="InParanoid" id="P43080"/>
<dbReference type="OMA" id="IRTINPC"/>
<dbReference type="OrthoDB" id="191686at2759"/>
<dbReference type="PAN-GO" id="P43080">
    <property type="GO annotations" value="6 GO annotations based on evolutionary models"/>
</dbReference>
<dbReference type="PhylomeDB" id="P43080"/>
<dbReference type="TreeFam" id="TF333971"/>
<dbReference type="PathwayCommons" id="P43080"/>
<dbReference type="Reactome" id="R-HSA-2514859">
    <property type="pathway name" value="Inactivation, recovery and regulation of the phototransduction cascade"/>
</dbReference>
<dbReference type="SignaLink" id="P43080"/>
<dbReference type="BioGRID-ORCS" id="2978">
    <property type="hits" value="14 hits in 1146 CRISPR screens"/>
</dbReference>
<dbReference type="ChiTaRS" id="GUCA1A">
    <property type="organism name" value="human"/>
</dbReference>
<dbReference type="GeneWiki" id="GUCA1A"/>
<dbReference type="GenomeRNAi" id="2978"/>
<dbReference type="Pharos" id="P43080">
    <property type="development level" value="Tbio"/>
</dbReference>
<dbReference type="PRO" id="PR:P43080"/>
<dbReference type="Proteomes" id="UP000005640">
    <property type="component" value="Chromosome 6"/>
</dbReference>
<dbReference type="RNAct" id="P43080">
    <property type="molecule type" value="protein"/>
</dbReference>
<dbReference type="Bgee" id="ENSG00000048545">
    <property type="expression patterns" value="Expressed in nucleus accumbens and 46 other cell types or tissues"/>
</dbReference>
<dbReference type="GO" id="GO:0120199">
    <property type="term" value="C:cone photoreceptor outer segment"/>
    <property type="evidence" value="ECO:0000314"/>
    <property type="project" value="UniProtKB"/>
</dbReference>
<dbReference type="GO" id="GO:0097381">
    <property type="term" value="C:photoreceptor disc membrane"/>
    <property type="evidence" value="ECO:0000304"/>
    <property type="project" value="Reactome"/>
</dbReference>
<dbReference type="GO" id="GO:0001917">
    <property type="term" value="C:photoreceptor inner segment"/>
    <property type="evidence" value="ECO:0000314"/>
    <property type="project" value="UniProtKB"/>
</dbReference>
<dbReference type="GO" id="GO:0005509">
    <property type="term" value="F:calcium ion binding"/>
    <property type="evidence" value="ECO:0000250"/>
    <property type="project" value="UniProtKB"/>
</dbReference>
<dbReference type="GO" id="GO:0008048">
    <property type="term" value="F:calcium sensitive guanylate cyclase activator activity"/>
    <property type="evidence" value="ECO:0000250"/>
    <property type="project" value="UniProtKB"/>
</dbReference>
<dbReference type="GO" id="GO:0030249">
    <property type="term" value="F:guanylate cyclase regulator activity"/>
    <property type="evidence" value="ECO:0000315"/>
    <property type="project" value="UniProtKB"/>
</dbReference>
<dbReference type="GO" id="GO:0071277">
    <property type="term" value="P:cellular response to calcium ion"/>
    <property type="evidence" value="ECO:0000250"/>
    <property type="project" value="UniProtKB"/>
</dbReference>
<dbReference type="GO" id="GO:0007602">
    <property type="term" value="P:phototransduction"/>
    <property type="evidence" value="ECO:0007669"/>
    <property type="project" value="Ensembl"/>
</dbReference>
<dbReference type="GO" id="GO:0010753">
    <property type="term" value="P:positive regulation of cGMP-mediated signaling"/>
    <property type="evidence" value="ECO:0007669"/>
    <property type="project" value="Ensembl"/>
</dbReference>
<dbReference type="GO" id="GO:0031284">
    <property type="term" value="P:positive regulation of guanylate cyclase activity"/>
    <property type="evidence" value="ECO:0000250"/>
    <property type="project" value="UniProtKB"/>
</dbReference>
<dbReference type="GO" id="GO:0009966">
    <property type="term" value="P:regulation of signal transduction"/>
    <property type="evidence" value="ECO:0000318"/>
    <property type="project" value="GO_Central"/>
</dbReference>
<dbReference type="GO" id="GO:0007165">
    <property type="term" value="P:signal transduction"/>
    <property type="evidence" value="ECO:0000303"/>
    <property type="project" value="ProtInc"/>
</dbReference>
<dbReference type="GO" id="GO:0007601">
    <property type="term" value="P:visual perception"/>
    <property type="evidence" value="ECO:0000318"/>
    <property type="project" value="GO_Central"/>
</dbReference>
<dbReference type="CDD" id="cd00051">
    <property type="entry name" value="EFh"/>
    <property type="match status" value="2"/>
</dbReference>
<dbReference type="FunFam" id="1.10.238.10:FF:000052">
    <property type="entry name" value="Guanylate cyclase activator 1A"/>
    <property type="match status" value="1"/>
</dbReference>
<dbReference type="Gene3D" id="1.10.238.10">
    <property type="entry name" value="EF-hand"/>
    <property type="match status" value="2"/>
</dbReference>
<dbReference type="InterPro" id="IPR011992">
    <property type="entry name" value="EF-hand-dom_pair"/>
</dbReference>
<dbReference type="InterPro" id="IPR018247">
    <property type="entry name" value="EF_Hand_1_Ca_BS"/>
</dbReference>
<dbReference type="InterPro" id="IPR002048">
    <property type="entry name" value="EF_hand_dom"/>
</dbReference>
<dbReference type="InterPro" id="IPR028846">
    <property type="entry name" value="Recoverin"/>
</dbReference>
<dbReference type="PANTHER" id="PTHR23055">
    <property type="entry name" value="CALCIUM BINDING PROTEINS"/>
    <property type="match status" value="1"/>
</dbReference>
<dbReference type="PANTHER" id="PTHR23055:SF13">
    <property type="entry name" value="GUANYLYL CYCLASE-ACTIVATING PROTEIN 1"/>
    <property type="match status" value="1"/>
</dbReference>
<dbReference type="Pfam" id="PF00036">
    <property type="entry name" value="EF-hand_1"/>
    <property type="match status" value="1"/>
</dbReference>
<dbReference type="Pfam" id="PF13499">
    <property type="entry name" value="EF-hand_7"/>
    <property type="match status" value="1"/>
</dbReference>
<dbReference type="PRINTS" id="PR00450">
    <property type="entry name" value="RECOVERIN"/>
</dbReference>
<dbReference type="SMART" id="SM00054">
    <property type="entry name" value="EFh"/>
    <property type="match status" value="3"/>
</dbReference>
<dbReference type="SUPFAM" id="SSF47473">
    <property type="entry name" value="EF-hand"/>
    <property type="match status" value="1"/>
</dbReference>
<dbReference type="PROSITE" id="PS00018">
    <property type="entry name" value="EF_HAND_1"/>
    <property type="match status" value="3"/>
</dbReference>
<dbReference type="PROSITE" id="PS50222">
    <property type="entry name" value="EF_HAND_2"/>
    <property type="match status" value="4"/>
</dbReference>
<keyword id="KW-0106">Calcium</keyword>
<keyword id="KW-0966">Cell projection</keyword>
<keyword id="KW-0182">Cone-rod dystrophy</keyword>
<keyword id="KW-0225">Disease variant</keyword>
<keyword id="KW-0449">Lipoprotein</keyword>
<keyword id="KW-0472">Membrane</keyword>
<keyword id="KW-0479">Metal-binding</keyword>
<keyword id="KW-0519">Myristate</keyword>
<keyword id="KW-1267">Proteomics identification</keyword>
<keyword id="KW-1185">Reference proteome</keyword>
<keyword id="KW-0677">Repeat</keyword>
<keyword id="KW-0716">Sensory transduction</keyword>
<keyword id="KW-0844">Vision</keyword>
<accession>P43080</accession>
<accession>B3KWT4</accession>
<accession>Q7Z6T1</accession>
<accession>Q9NU14</accession>
<comment type="function">
    <text evidence="1 2 11 19 20">Stimulates retinal guanylyl cyclase when free calcium ions concentration is low and inhibits guanylyl cyclase when free calcium ions concentration is elevated (PubMed:18706439, PubMed:19459154, PubMed:30184081, PubMed:30622141). This Ca(2+)-sensitive regulation of retinal guanylyl cyclase is a key event in recovery of the dark state of rod photoreceptors following light exposure (By similarity). May be involved in cone photoreceptor light response and recovery of response in bright light (By similarity).</text>
</comment>
<comment type="subunit">
    <text evidence="19">Homodimer.</text>
</comment>
<comment type="interaction">
    <interactant intactId="EBI-6873005">
        <id>P43080</id>
    </interactant>
    <interactant intactId="EBI-712648">
        <id>O95994</id>
        <label>AGR2</label>
    </interactant>
    <organismsDiffer>false</organismsDiffer>
    <experiments>3</experiments>
</comment>
<comment type="interaction">
    <interactant intactId="EBI-6873005">
        <id>P43080</id>
    </interactant>
    <interactant intactId="EBI-19947914">
        <id>Q9BXJ0</id>
        <label>C1QTNF5</label>
    </interactant>
    <organismsDiffer>false</organismsDiffer>
    <experiments>3</experiments>
</comment>
<comment type="interaction">
    <interactant intactId="EBI-6873005">
        <id>P43080</id>
    </interactant>
    <interactant intactId="EBI-742054">
        <id>Q96D03</id>
        <label>DDIT4L</label>
    </interactant>
    <organismsDiffer>false</organismsDiffer>
    <experiments>3</experiments>
</comment>
<comment type="interaction">
    <interactant intactId="EBI-6873005">
        <id>P43080</id>
    </interactant>
    <interactant intactId="EBI-17250528">
        <id>Q96PH6</id>
        <label>DEFB118</label>
    </interactant>
    <organismsDiffer>false</organismsDiffer>
    <experiments>3</experiments>
</comment>
<comment type="interaction">
    <interactant intactId="EBI-6873005">
        <id>P43080</id>
    </interactant>
    <interactant intactId="EBI-19954058">
        <id>O15499</id>
        <label>GSC2</label>
    </interactant>
    <organismsDiffer>false</organismsDiffer>
    <experiments>3</experiments>
</comment>
<comment type="interaction">
    <interactant intactId="EBI-6873005">
        <id>P43080</id>
    </interactant>
    <interactant intactId="EBI-743591">
        <id>Q9BW62</id>
        <label>KATNAL1</label>
    </interactant>
    <organismsDiffer>false</organismsDiffer>
    <experiments>3</experiments>
</comment>
<comment type="interaction">
    <interactant intactId="EBI-6873005">
        <id>P43080</id>
    </interactant>
    <interactant intactId="EBI-2805516">
        <id>P31321</id>
        <label>PRKAR1B</label>
    </interactant>
    <organismsDiffer>false</organismsDiffer>
    <experiments>3</experiments>
</comment>
<comment type="subcellular location">
    <subcellularLocation>
        <location>Membrane</location>
        <topology evidence="2">Lipid-anchor</topology>
    </subcellularLocation>
    <subcellularLocation>
        <location evidence="25">Photoreceptor inner segment</location>
    </subcellularLocation>
    <subcellularLocation>
        <location evidence="25">Cell projection</location>
        <location evidence="25">Cilium</location>
        <location evidence="25">Photoreceptor outer segment</location>
    </subcellularLocation>
    <text evidence="25">Present at higher levels in cone than in rod outer segments (PubMed:9620085). Subcellular location is not affected by light or dark conditions.</text>
</comment>
<comment type="tissue specificity">
    <text evidence="25">In the retina, it is expressed in rod and cone photoreceptors.</text>
</comment>
<comment type="domain">
    <text evidence="2">Binds three calcium ions (via EF-hands 2, 3 and 4) when calcium levels are high. Binds Mg(2+) when calcium levels are low.</text>
</comment>
<comment type="disease" evidence="5 6 7 8 9 11 12 17 18 21 23 24">
    <disease id="DI-00317">
        <name>Cone dystrophy 3</name>
        <acronym>COD3</acronym>
        <description>An autosomal dominant cone dystrophy. Cone dystrophies are retinal dystrophies characterized by progressive degeneration of the cone photoreceptors with preservation of rod function, as indicated by electroretinogram. However, some rod involvement may be present in some cone dystrophies, particularly at late stage. Affected individuals suffer from photophobia, loss of visual acuity, color vision and central visual field. Another sign is the absence of macular lesions for many years. Cone dystrophies are distinguished from the cone-rod dystrophies in which some loss of peripheral vision also occurs.</description>
        <dbReference type="MIM" id="602093"/>
    </disease>
    <text>The disease is caused by variants affecting the gene represented in this entry.</text>
</comment>
<comment type="disease" evidence="10 13 14 15 19 20 22">
    <disease id="DI-05820">
        <name>Cone-rod dystrophy 14</name>
        <acronym>CORD14</acronym>
        <description>An autosomal dominant form of cone-rod dystrophy, a retinal disease characterized by retinal pigment deposits visible on fundus examination, predominantly in the macular region, and initial loss of cone photoreceptors followed by rod degeneration. This leads to decreased visual acuity and sensitivity in the central visual field, followed by loss of peripheral vision. Severe loss of vision occurs earlier than in retinitis pigmentosa, due to cone photoreceptors degenerating at a higher rate than rod photoreceptors.</description>
        <dbReference type="MIM" id="602093"/>
    </disease>
    <text>The disease is caused by variants affecting the gene represented in this entry.</text>
</comment>
<evidence type="ECO:0000250" key="1">
    <source>
        <dbReference type="UniProtKB" id="P43081"/>
    </source>
</evidence>
<evidence type="ECO:0000250" key="2">
    <source>
        <dbReference type="UniProtKB" id="P46065"/>
    </source>
</evidence>
<evidence type="ECO:0000255" key="3"/>
<evidence type="ECO:0000255" key="4">
    <source>
        <dbReference type="PROSITE-ProRule" id="PRU00448"/>
    </source>
</evidence>
<evidence type="ECO:0000269" key="5">
    <source>
    </source>
</evidence>
<evidence type="ECO:0000269" key="6">
    <source>
    </source>
</evidence>
<evidence type="ECO:0000269" key="7">
    <source>
    </source>
</evidence>
<evidence type="ECO:0000269" key="8">
    <source>
    </source>
</evidence>
<evidence type="ECO:0000269" key="9">
    <source>
    </source>
</evidence>
<evidence type="ECO:0000269" key="10">
    <source>
    </source>
</evidence>
<evidence type="ECO:0000269" key="11">
    <source>
    </source>
</evidence>
<evidence type="ECO:0000269" key="12">
    <source>
    </source>
</evidence>
<evidence type="ECO:0000269" key="13">
    <source>
    </source>
</evidence>
<evidence type="ECO:0000269" key="14">
    <source>
    </source>
</evidence>
<evidence type="ECO:0000269" key="15">
    <source>
    </source>
</evidence>
<evidence type="ECO:0000269" key="16">
    <source>
    </source>
</evidence>
<evidence type="ECO:0000269" key="17">
    <source>
    </source>
</evidence>
<evidence type="ECO:0000269" key="18">
    <source>
    </source>
</evidence>
<evidence type="ECO:0000269" key="19">
    <source>
    </source>
</evidence>
<evidence type="ECO:0000269" key="20">
    <source>
    </source>
</evidence>
<evidence type="ECO:0000269" key="21">
    <source>
    </source>
</evidence>
<evidence type="ECO:0000269" key="22">
    <source>
    </source>
</evidence>
<evidence type="ECO:0000269" key="23">
    <source>
    </source>
</evidence>
<evidence type="ECO:0000269" key="24">
    <source>
    </source>
</evidence>
<evidence type="ECO:0000269" key="25">
    <source>
    </source>
</evidence>
<evidence type="ECO:0000305" key="26"/>
<organism>
    <name type="scientific">Homo sapiens</name>
    <name type="common">Human</name>
    <dbReference type="NCBI Taxonomy" id="9606"/>
    <lineage>
        <taxon>Eukaryota</taxon>
        <taxon>Metazoa</taxon>
        <taxon>Chordata</taxon>
        <taxon>Craniata</taxon>
        <taxon>Vertebrata</taxon>
        <taxon>Euteleostomi</taxon>
        <taxon>Mammalia</taxon>
        <taxon>Eutheria</taxon>
        <taxon>Euarchontoglires</taxon>
        <taxon>Primates</taxon>
        <taxon>Haplorrhini</taxon>
        <taxon>Catarrhini</taxon>
        <taxon>Hominidae</taxon>
        <taxon>Homo</taxon>
    </lineage>
</organism>
<name>GUC1A_HUMAN</name>
<protein>
    <recommendedName>
        <fullName>Guanylyl cyclase-activating protein 1</fullName>
        <shortName>GCAP 1</shortName>
    </recommendedName>
    <alternativeName>
        <fullName>Guanylate cyclase activator 1A</fullName>
    </alternativeName>
</protein>
<reference key="1">
    <citation type="journal article" date="1994" name="J. Biol. Chem.">
        <title>Molecular characterization of human and mouse photoreceptor guanylate cyclase-activating protein (GCAP) and chromosomal localization of the human gene.</title>
        <authorList>
            <person name="Subbaraya I."/>
            <person name="Ruiz C.C."/>
            <person name="Helekar B.S."/>
            <person name="Zhao X."/>
            <person name="Gorczyca W.A."/>
            <person name="Pettenati M.J."/>
            <person name="Rao P.N."/>
            <person name="Palczewski K."/>
            <person name="Baehr W."/>
        </authorList>
    </citation>
    <scope>NUCLEOTIDE SEQUENCE [GENOMIC DNA / MRNA]</scope>
    <source>
        <tissue>Retina</tissue>
    </source>
</reference>
<reference key="2">
    <citation type="journal article" date="2004" name="Nat. Genet.">
        <title>Complete sequencing and characterization of 21,243 full-length human cDNAs.</title>
        <authorList>
            <person name="Ota T."/>
            <person name="Suzuki Y."/>
            <person name="Nishikawa T."/>
            <person name="Otsuki T."/>
            <person name="Sugiyama T."/>
            <person name="Irie R."/>
            <person name="Wakamatsu A."/>
            <person name="Hayashi K."/>
            <person name="Sato H."/>
            <person name="Nagai K."/>
            <person name="Kimura K."/>
            <person name="Makita H."/>
            <person name="Sekine M."/>
            <person name="Obayashi M."/>
            <person name="Nishi T."/>
            <person name="Shibahara T."/>
            <person name="Tanaka T."/>
            <person name="Ishii S."/>
            <person name="Yamamoto J."/>
            <person name="Saito K."/>
            <person name="Kawai Y."/>
            <person name="Isono Y."/>
            <person name="Nakamura Y."/>
            <person name="Nagahari K."/>
            <person name="Murakami K."/>
            <person name="Yasuda T."/>
            <person name="Iwayanagi T."/>
            <person name="Wagatsuma M."/>
            <person name="Shiratori A."/>
            <person name="Sudo H."/>
            <person name="Hosoiri T."/>
            <person name="Kaku Y."/>
            <person name="Kodaira H."/>
            <person name="Kondo H."/>
            <person name="Sugawara M."/>
            <person name="Takahashi M."/>
            <person name="Kanda K."/>
            <person name="Yokoi T."/>
            <person name="Furuya T."/>
            <person name="Kikkawa E."/>
            <person name="Omura Y."/>
            <person name="Abe K."/>
            <person name="Kamihara K."/>
            <person name="Katsuta N."/>
            <person name="Sato K."/>
            <person name="Tanikawa M."/>
            <person name="Yamazaki M."/>
            <person name="Ninomiya K."/>
            <person name="Ishibashi T."/>
            <person name="Yamashita H."/>
            <person name="Murakawa K."/>
            <person name="Fujimori K."/>
            <person name="Tanai H."/>
            <person name="Kimata M."/>
            <person name="Watanabe M."/>
            <person name="Hiraoka S."/>
            <person name="Chiba Y."/>
            <person name="Ishida S."/>
            <person name="Ono Y."/>
            <person name="Takiguchi S."/>
            <person name="Watanabe S."/>
            <person name="Yosida M."/>
            <person name="Hotuta T."/>
            <person name="Kusano J."/>
            <person name="Kanehori K."/>
            <person name="Takahashi-Fujii A."/>
            <person name="Hara H."/>
            <person name="Tanase T.-O."/>
            <person name="Nomura Y."/>
            <person name="Togiya S."/>
            <person name="Komai F."/>
            <person name="Hara R."/>
            <person name="Takeuchi K."/>
            <person name="Arita M."/>
            <person name="Imose N."/>
            <person name="Musashino K."/>
            <person name="Yuuki H."/>
            <person name="Oshima A."/>
            <person name="Sasaki N."/>
            <person name="Aotsuka S."/>
            <person name="Yoshikawa Y."/>
            <person name="Matsunawa H."/>
            <person name="Ichihara T."/>
            <person name="Shiohata N."/>
            <person name="Sano S."/>
            <person name="Moriya S."/>
            <person name="Momiyama H."/>
            <person name="Satoh N."/>
            <person name="Takami S."/>
            <person name="Terashima Y."/>
            <person name="Suzuki O."/>
            <person name="Nakagawa S."/>
            <person name="Senoh A."/>
            <person name="Mizoguchi H."/>
            <person name="Goto Y."/>
            <person name="Shimizu F."/>
            <person name="Wakebe H."/>
            <person name="Hishigaki H."/>
            <person name="Watanabe T."/>
            <person name="Sugiyama A."/>
            <person name="Takemoto M."/>
            <person name="Kawakami B."/>
            <person name="Yamazaki M."/>
            <person name="Watanabe K."/>
            <person name="Kumagai A."/>
            <person name="Itakura S."/>
            <person name="Fukuzumi Y."/>
            <person name="Fujimori Y."/>
            <person name="Komiyama M."/>
            <person name="Tashiro H."/>
            <person name="Tanigami A."/>
            <person name="Fujiwara T."/>
            <person name="Ono T."/>
            <person name="Yamada K."/>
            <person name="Fujii Y."/>
            <person name="Ozaki K."/>
            <person name="Hirao M."/>
            <person name="Ohmori Y."/>
            <person name="Kawabata A."/>
            <person name="Hikiji T."/>
            <person name="Kobatake N."/>
            <person name="Inagaki H."/>
            <person name="Ikema Y."/>
            <person name="Okamoto S."/>
            <person name="Okitani R."/>
            <person name="Kawakami T."/>
            <person name="Noguchi S."/>
            <person name="Itoh T."/>
            <person name="Shigeta K."/>
            <person name="Senba T."/>
            <person name="Matsumura K."/>
            <person name="Nakajima Y."/>
            <person name="Mizuno T."/>
            <person name="Morinaga M."/>
            <person name="Sasaki M."/>
            <person name="Togashi T."/>
            <person name="Oyama M."/>
            <person name="Hata H."/>
            <person name="Watanabe M."/>
            <person name="Komatsu T."/>
            <person name="Mizushima-Sugano J."/>
            <person name="Satoh T."/>
            <person name="Shirai Y."/>
            <person name="Takahashi Y."/>
            <person name="Nakagawa K."/>
            <person name="Okumura K."/>
            <person name="Nagase T."/>
            <person name="Nomura N."/>
            <person name="Kikuchi H."/>
            <person name="Masuho Y."/>
            <person name="Yamashita R."/>
            <person name="Nakai K."/>
            <person name="Yada T."/>
            <person name="Nakamura Y."/>
            <person name="Ohara O."/>
            <person name="Isogai T."/>
            <person name="Sugano S."/>
        </authorList>
    </citation>
    <scope>NUCLEOTIDE SEQUENCE [LARGE SCALE MRNA]</scope>
    <source>
        <tissue>Testis</tissue>
    </source>
</reference>
<reference key="3">
    <citation type="journal article" date="2003" name="Nature">
        <title>The DNA sequence and analysis of human chromosome 6.</title>
        <authorList>
            <person name="Mungall A.J."/>
            <person name="Palmer S.A."/>
            <person name="Sims S.K."/>
            <person name="Edwards C.A."/>
            <person name="Ashurst J.L."/>
            <person name="Wilming L."/>
            <person name="Jones M.C."/>
            <person name="Horton R."/>
            <person name="Hunt S.E."/>
            <person name="Scott C.E."/>
            <person name="Gilbert J.G.R."/>
            <person name="Clamp M.E."/>
            <person name="Bethel G."/>
            <person name="Milne S."/>
            <person name="Ainscough R."/>
            <person name="Almeida J.P."/>
            <person name="Ambrose K.D."/>
            <person name="Andrews T.D."/>
            <person name="Ashwell R.I.S."/>
            <person name="Babbage A.K."/>
            <person name="Bagguley C.L."/>
            <person name="Bailey J."/>
            <person name="Banerjee R."/>
            <person name="Barker D.J."/>
            <person name="Barlow K.F."/>
            <person name="Bates K."/>
            <person name="Beare D.M."/>
            <person name="Beasley H."/>
            <person name="Beasley O."/>
            <person name="Bird C.P."/>
            <person name="Blakey S.E."/>
            <person name="Bray-Allen S."/>
            <person name="Brook J."/>
            <person name="Brown A.J."/>
            <person name="Brown J.Y."/>
            <person name="Burford D.C."/>
            <person name="Burrill W."/>
            <person name="Burton J."/>
            <person name="Carder C."/>
            <person name="Carter N.P."/>
            <person name="Chapman J.C."/>
            <person name="Clark S.Y."/>
            <person name="Clark G."/>
            <person name="Clee C.M."/>
            <person name="Clegg S."/>
            <person name="Cobley V."/>
            <person name="Collier R.E."/>
            <person name="Collins J.E."/>
            <person name="Colman L.K."/>
            <person name="Corby N.R."/>
            <person name="Coville G.J."/>
            <person name="Culley K.M."/>
            <person name="Dhami P."/>
            <person name="Davies J."/>
            <person name="Dunn M."/>
            <person name="Earthrowl M.E."/>
            <person name="Ellington A.E."/>
            <person name="Evans K.A."/>
            <person name="Faulkner L."/>
            <person name="Francis M.D."/>
            <person name="Frankish A."/>
            <person name="Frankland J."/>
            <person name="French L."/>
            <person name="Garner P."/>
            <person name="Garnett J."/>
            <person name="Ghori M.J."/>
            <person name="Gilby L.M."/>
            <person name="Gillson C.J."/>
            <person name="Glithero R.J."/>
            <person name="Grafham D.V."/>
            <person name="Grant M."/>
            <person name="Gribble S."/>
            <person name="Griffiths C."/>
            <person name="Griffiths M.N.D."/>
            <person name="Hall R."/>
            <person name="Halls K.S."/>
            <person name="Hammond S."/>
            <person name="Harley J.L."/>
            <person name="Hart E.A."/>
            <person name="Heath P.D."/>
            <person name="Heathcott R."/>
            <person name="Holmes S.J."/>
            <person name="Howden P.J."/>
            <person name="Howe K.L."/>
            <person name="Howell G.R."/>
            <person name="Huckle E."/>
            <person name="Humphray S.J."/>
            <person name="Humphries M.D."/>
            <person name="Hunt A.R."/>
            <person name="Johnson C.M."/>
            <person name="Joy A.A."/>
            <person name="Kay M."/>
            <person name="Keenan S.J."/>
            <person name="Kimberley A.M."/>
            <person name="King A."/>
            <person name="Laird G.K."/>
            <person name="Langford C."/>
            <person name="Lawlor S."/>
            <person name="Leongamornlert D.A."/>
            <person name="Leversha M."/>
            <person name="Lloyd C.R."/>
            <person name="Lloyd D.M."/>
            <person name="Loveland J.E."/>
            <person name="Lovell J."/>
            <person name="Martin S."/>
            <person name="Mashreghi-Mohammadi M."/>
            <person name="Maslen G.L."/>
            <person name="Matthews L."/>
            <person name="McCann O.T."/>
            <person name="McLaren S.J."/>
            <person name="McLay K."/>
            <person name="McMurray A."/>
            <person name="Moore M.J.F."/>
            <person name="Mullikin J.C."/>
            <person name="Niblett D."/>
            <person name="Nickerson T."/>
            <person name="Novik K.L."/>
            <person name="Oliver K."/>
            <person name="Overton-Larty E.K."/>
            <person name="Parker A."/>
            <person name="Patel R."/>
            <person name="Pearce A.V."/>
            <person name="Peck A.I."/>
            <person name="Phillimore B.J.C.T."/>
            <person name="Phillips S."/>
            <person name="Plumb R.W."/>
            <person name="Porter K.M."/>
            <person name="Ramsey Y."/>
            <person name="Ranby S.A."/>
            <person name="Rice C.M."/>
            <person name="Ross M.T."/>
            <person name="Searle S.M."/>
            <person name="Sehra H.K."/>
            <person name="Sheridan E."/>
            <person name="Skuce C.D."/>
            <person name="Smith S."/>
            <person name="Smith M."/>
            <person name="Spraggon L."/>
            <person name="Squares S.L."/>
            <person name="Steward C.A."/>
            <person name="Sycamore N."/>
            <person name="Tamlyn-Hall G."/>
            <person name="Tester J."/>
            <person name="Theaker A.J."/>
            <person name="Thomas D.W."/>
            <person name="Thorpe A."/>
            <person name="Tracey A."/>
            <person name="Tromans A."/>
            <person name="Tubby B."/>
            <person name="Wall M."/>
            <person name="Wallis J.M."/>
            <person name="West A.P."/>
            <person name="White S.S."/>
            <person name="Whitehead S.L."/>
            <person name="Whittaker H."/>
            <person name="Wild A."/>
            <person name="Willey D.J."/>
            <person name="Wilmer T.E."/>
            <person name="Wood J.M."/>
            <person name="Wray P.W."/>
            <person name="Wyatt J.C."/>
            <person name="Young L."/>
            <person name="Younger R.M."/>
            <person name="Bentley D.R."/>
            <person name="Coulson A."/>
            <person name="Durbin R.M."/>
            <person name="Hubbard T."/>
            <person name="Sulston J.E."/>
            <person name="Dunham I."/>
            <person name="Rogers J."/>
            <person name="Beck S."/>
        </authorList>
    </citation>
    <scope>NUCLEOTIDE SEQUENCE [LARGE SCALE GENOMIC DNA]</scope>
</reference>
<reference key="4">
    <citation type="submission" date="2005-07" db="EMBL/GenBank/DDBJ databases">
        <authorList>
            <person name="Mural R.J."/>
            <person name="Istrail S."/>
            <person name="Sutton G.G."/>
            <person name="Florea L."/>
            <person name="Halpern A.L."/>
            <person name="Mobarry C.M."/>
            <person name="Lippert R."/>
            <person name="Walenz B."/>
            <person name="Shatkay H."/>
            <person name="Dew I."/>
            <person name="Miller J.R."/>
            <person name="Flanigan M.J."/>
            <person name="Edwards N.J."/>
            <person name="Bolanos R."/>
            <person name="Fasulo D."/>
            <person name="Halldorsson B.V."/>
            <person name="Hannenhalli S."/>
            <person name="Turner R."/>
            <person name="Yooseph S."/>
            <person name="Lu F."/>
            <person name="Nusskern D.R."/>
            <person name="Shue B.C."/>
            <person name="Zheng X.H."/>
            <person name="Zhong F."/>
            <person name="Delcher A.L."/>
            <person name="Huson D.H."/>
            <person name="Kravitz S.A."/>
            <person name="Mouchard L."/>
            <person name="Reinert K."/>
            <person name="Remington K.A."/>
            <person name="Clark A.G."/>
            <person name="Waterman M.S."/>
            <person name="Eichler E.E."/>
            <person name="Adams M.D."/>
            <person name="Hunkapiller M.W."/>
            <person name="Myers E.W."/>
            <person name="Venter J.C."/>
        </authorList>
    </citation>
    <scope>NUCLEOTIDE SEQUENCE [LARGE SCALE GENOMIC DNA]</scope>
</reference>
<reference key="5">
    <citation type="journal article" date="2004" name="Genome Res.">
        <title>The status, quality, and expansion of the NIH full-length cDNA project: the Mammalian Gene Collection (MGC).</title>
        <authorList>
            <consortium name="The MGC Project Team"/>
        </authorList>
    </citation>
    <scope>NUCLEOTIDE SEQUENCE [LARGE SCALE MRNA]</scope>
    <source>
        <tissue>Brain</tissue>
    </source>
</reference>
<reference key="6">
    <citation type="journal article" date="1998" name="Invest. Ophthalmol. Vis. Sci.">
        <title>The localization of guanylyl cyclase-activating proteins in the mammalian retina.</title>
        <authorList>
            <person name="Cuenca N."/>
            <person name="Lopez S."/>
            <person name="Howes K."/>
            <person name="Kolb H."/>
        </authorList>
    </citation>
    <scope>TISSUE SPECIFICITY</scope>
    <scope>SUBCELLULAR LOCATION</scope>
</reference>
<reference key="7">
    <citation type="journal article" date="1998" name="Hum. Mol. Genet.">
        <title>A mutation in guanylate cyclase activator 1A (GUCA1A) in an autosomal dominant cone dystrophy pedigree mapping to a new locus on chromosome 6p21.1.</title>
        <authorList>
            <person name="Payne A.M."/>
            <person name="Downes S.M."/>
            <person name="Bessant D.A.R."/>
            <person name="Taylor R."/>
            <person name="Holder G.E."/>
            <person name="Warren M.J."/>
            <person name="Bird A.C."/>
            <person name="Bhattacharya S.S."/>
        </authorList>
    </citation>
    <scope>VARIANT COD3 CYS-99</scope>
</reference>
<reference key="8">
    <citation type="journal article" date="2000" name="Biochim. Biophys. Acta">
        <title>Ca(2+)-binding proteins in the retina: from discovery to etiology of human disease.</title>
        <authorList>
            <person name="Sokal I."/>
            <person name="Li N."/>
            <person name="Verlinde C.L.M.J."/>
            <person name="Haeseleer F."/>
            <person name="Baehr W."/>
            <person name="Palczewski K."/>
        </authorList>
    </citation>
    <scope>CHARACTERIZATION OF VARIANTS COD3 LEU-50 AND CYS-99</scope>
</reference>
<reference key="9">
    <citation type="journal article" date="2001" name="Arch. Ophthalmol.">
        <title>Autosomal dominant cone and cone-rod dystrophy with mutations in the guanylate cyclase activator 1A gene-encoding guanylate cyclase activating protein-1.</title>
        <authorList>
            <person name="Downes S.M."/>
            <person name="Holder G.E."/>
            <person name="Fitzke F.W."/>
            <person name="Payne A.M."/>
            <person name="Warren M.J."/>
            <person name="Bhattacharya S.S."/>
            <person name="Bird A.C."/>
        </authorList>
    </citation>
    <scope>VARIANTS COD3 LEU-50 AND CYS-99</scope>
</reference>
<reference key="10">
    <citation type="journal article" date="2001" name="Am. J. Hum. Genet.">
        <title>Identification and functional consequences of a new mutation (E155G) in the gene for GCAP1 that causes autosomal dominant cone dystrophy.</title>
        <authorList>
            <person name="Wilkie S.E."/>
            <person name="Li Y."/>
            <person name="Deery E.C."/>
            <person name="Newbold R.J."/>
            <person name="Garibaldi D."/>
            <person name="Bateman J.B."/>
            <person name="Zhang H."/>
            <person name="Lin W."/>
            <person name="Zack D.J."/>
            <person name="Bhattacharya S.S."/>
            <person name="Warren M.J."/>
            <person name="Hunt D.M."/>
            <person name="Zhang K."/>
        </authorList>
    </citation>
    <scope>VARIANT COD3 GLY-155</scope>
</reference>
<reference key="11">
    <citation type="journal article" date="2004" name="Invest. Ophthalmol. Vis. Sci.">
        <title>A novel mutation (I143NT) in guanylate cyclase-activating protein 1 (GCAP1) associated with autosomal dominant cone degeneration.</title>
        <authorList>
            <person name="Nishiguchi K.M."/>
            <person name="Sokal I."/>
            <person name="Yang L."/>
            <person name="Roychowdhury N."/>
            <person name="Palczewski K."/>
            <person name="Berson E.L."/>
            <person name="Dryja T.P."/>
            <person name="Baehr W."/>
        </authorList>
    </citation>
    <scope>VARIANT COD3 ILE-143 DELINS ASN-THR</scope>
    <scope>VARIANT ILE-114</scope>
</reference>
<reference key="12">
    <citation type="journal article" date="2005" name="Invest. Ophthalmol. Vis. Sci.">
        <title>A novel GCAP1 missense mutation (L151F) in a large family with autosomal dominant cone-rod dystrophy (adCORD).</title>
        <authorList>
            <person name="Sokal I."/>
            <person name="Dupps W.J."/>
            <person name="Grassi M.A."/>
            <person name="Brown J. Jr."/>
            <person name="Affatigato L.M."/>
            <person name="Roychowdhury N."/>
            <person name="Yang L."/>
            <person name="Filipek S."/>
            <person name="Palczewski K."/>
            <person name="Stone E.M."/>
            <person name="Baehr W."/>
        </authorList>
    </citation>
    <scope>VARIANT CORD14 PHE-151</scope>
</reference>
<reference key="13">
    <citation type="journal article" date="2005" name="Mol. Vis.">
        <title>Autosomal dominant cone dystrophy caused by a novel mutation in the GCAP1 gene (GUCA1A).</title>
        <authorList>
            <person name="Jiang L."/>
            <person name="Katz B.J."/>
            <person name="Yang Z."/>
            <person name="Zhao Y."/>
            <person name="Faulkner N."/>
            <person name="Hu J."/>
            <person name="Baird J."/>
            <person name="Baehr W."/>
            <person name="Creel D.J."/>
            <person name="Zhang K."/>
        </authorList>
    </citation>
    <scope>VARIANT COD3 PHE-151</scope>
</reference>
<reference key="14">
    <citation type="journal article" date="2008" name="Vision Res.">
        <title>A novel GCAP1(N104K) mutation in EF-hand 3 (EF3) linked to autosomal dominant cone dystrophy.</title>
        <authorList>
            <person name="Jiang L."/>
            <person name="Wheaton D."/>
            <person name="Bereta G."/>
            <person name="Zhang K."/>
            <person name="Palczewski K."/>
            <person name="Birch D.G."/>
            <person name="Baehr W."/>
        </authorList>
    </citation>
    <scope>VARIANT COD3 LYS-104</scope>
    <scope>CHARACTERIZATION OF VARIANT COD3 LYS-104</scope>
    <scope>FUNCTION</scope>
</reference>
<reference key="15">
    <citation type="journal article" date="2009" name="Hum. Mutat.">
        <title>Mutations in the GUCA1A gene involved in hereditary cone dystrophies impair calcium-mediated regulation of guanylate cyclase.</title>
        <authorList>
            <person name="Kitiratschky V.B.D."/>
            <person name="Behnen P."/>
            <person name="Kellner U."/>
            <person name="Heckenlively J.R."/>
            <person name="Zrenner E."/>
            <person name="Jaegle H."/>
            <person name="Kohl S."/>
            <person name="Wissinger B."/>
            <person name="Koch K.-W."/>
        </authorList>
    </citation>
    <scope>VARIANTS COD3 LYS-89; GLU-100; PHE-151 AND VAL-159</scope>
    <scope>CHARACTERIZATION OF VARIANTS COD3 LYS-89; GLU-100 AND VAL-159</scope>
    <scope>FUNCTION</scope>
</reference>
<reference key="16">
    <citation type="journal article" date="2013" name="Biomed. Res. Int.">
        <title>Novel GUCA1A mutations suggesting possible mechanisms of pathogenesis in cone, cone-rod, and macular dystrophy patients.</title>
        <authorList>
            <person name="Kamenarova K."/>
            <person name="Corton M."/>
            <person name="Garcia-Sandoval B."/>
            <person name="Fernandez-San Jose P."/>
            <person name="Panchev V."/>
            <person name="Avila-Fernandez A."/>
            <person name="Lopez-Molina M.I."/>
            <person name="Chakarova C."/>
            <person name="Ayuso C."/>
            <person name="Bhattacharya S.S."/>
        </authorList>
    </citation>
    <scope>VARIANTS CORD14 PHE-84 AND THR-107</scope>
</reference>
<reference key="17">
    <citation type="journal article" date="2014" name="Doc. Ophthalmol.">
        <title>Disease progression in autosomal dominant cone-rod dystrophy caused by a novel mutation (D100G) in the GUCA1A gene.</title>
        <authorList>
            <person name="Nong E."/>
            <person name="Lee W."/>
            <person name="Merriam J.E."/>
            <person name="Allikmets R."/>
            <person name="Tsang S.H."/>
        </authorList>
    </citation>
    <scope>VARIANT CORD14 GLY-100</scope>
</reference>
<reference key="18">
    <citation type="journal article" date="2015" name="Hum. Mol. Genet.">
        <title>Two retinal dystrophy-associated missense mutations in GUCA1A with distinct molecular properties result in a similar aberrant regulation of the retinal guanylate cyclase.</title>
        <authorList>
            <person name="Marino V."/>
            <person name="Scholten A."/>
            <person name="Koch K.W."/>
            <person name="Dell'Orco D."/>
        </authorList>
    </citation>
    <scope>CHARACTERIZATION OF VARIANTS CORD14 PHE-84 AND THR-107</scope>
</reference>
<reference key="19">
    <citation type="journal article" date="2017" name="Genet. Med.">
        <title>GUCA1A mutation causes maculopathy in a five-generation family with a wide spectrum of severity.</title>
        <authorList>
            <person name="Chen X."/>
            <person name="Sheng X."/>
            <person name="Zhuang W."/>
            <person name="Sun X."/>
            <person name="Liu G."/>
            <person name="Shi X."/>
            <person name="Huang G."/>
            <person name="Mei Y."/>
            <person name="Li Y."/>
            <person name="Pan X."/>
            <person name="Liu Y."/>
            <person name="Li Z."/>
            <person name="Zhao Q."/>
            <person name="Yan B."/>
            <person name="Zhao C."/>
        </authorList>
    </citation>
    <scope>VARIANT COD3 LEU-120</scope>
</reference>
<reference key="20">
    <citation type="journal article" date="2017" name="Hum. Mol. Genet.">
        <title>Dysfunction of cGMP signalling in photoreceptors by a macular dystrophy-related mutation in the calcium sensor GCAP1.</title>
        <authorList>
            <person name="Vocke F."/>
            <person name="Weisschuh N."/>
            <person name="Marino V."/>
            <person name="Malfatti S."/>
            <person name="Jacobson S.G."/>
            <person name="Reiff C.M."/>
            <person name="Dell'Orco D."/>
            <person name="Koch K.W."/>
        </authorList>
    </citation>
    <scope>VARIANT PHE-176</scope>
    <scope>CHARACTERIZATION OF VARIANT PHE-176</scope>
</reference>
<reference key="21">
    <citation type="journal article" date="2017" name="Mol. Vis.">
        <title>Cone dystrophy or macular dystrophy associated with novel autosomal dominant GUCA1A mutations.</title>
        <authorList>
            <person name="Manes G."/>
            <person name="Mamouni S."/>
            <person name="Herald E."/>
            <person name="Richard A.C."/>
            <person name="Senechal A."/>
            <person name="Aouad K."/>
            <person name="Bocquet B."/>
            <person name="Meunier I."/>
            <person name="Hamel C.P."/>
        </authorList>
    </citation>
    <scope>VARIANT VAL-101 DEL</scope>
    <scope>VARIANT COD3 GLU-148</scope>
</reference>
<reference key="22">
    <citation type="journal article" date="2018" name="Hum. Mol. Genet.">
        <title>A novel p.(Glu111Val) missense mutation in GUCA1A associated with cone-rod dystrophy leads to impaired calcium sensing and perturbed second messenger homeostasis in photoreceptors.</title>
        <authorList>
            <person name="Marino V."/>
            <person name="Dal Cortivo G."/>
            <person name="Oppici E."/>
            <person name="Maltese P.E."/>
            <person name="D'Esposito F."/>
            <person name="Manara E."/>
            <person name="Ziccardi L."/>
            <person name="Falsini B."/>
            <person name="Magli A."/>
            <person name="Bertelli M."/>
            <person name="Dell'Orco D."/>
        </authorList>
    </citation>
    <scope>VARIANT CORD14 VAL-111</scope>
    <scope>CHARACTERIZATION OF VARIANT CORD14 VAL-111</scope>
    <scope>FUNCTION</scope>
    <scope>SUBUNIT</scope>
</reference>
<reference key="23">
    <citation type="journal article" date="2019" name="J. Biol. Chem.">
        <title>A G86R mutation in the calcium-sensor protein GCAP1 alters regulation of retinal guanylyl cyclase and causes dominant cone-rod degeneration.</title>
        <authorList>
            <person name="Peshenko I.V."/>
            <person name="Cideciyan A.V."/>
            <person name="Sumaroka A."/>
            <person name="Olshevskaya E.V."/>
            <person name="Scholten A."/>
            <person name="Abbas S."/>
            <person name="Koch K.W."/>
            <person name="Jacobson S.G."/>
            <person name="Dizhoor A.M."/>
        </authorList>
    </citation>
    <scope>VARIANT CORD14 ARG-86</scope>
    <scope>CHARACTERIZATION OF VARIANT CORD14 ARG-86</scope>
    <scope>FUNCTION</scope>
</reference>
<reference key="24">
    <citation type="journal article" date="2019" name="Mol. Vis.">
        <title>Functional characterization of a novel GUCA1A missense mutation (D144G) in autosomal dominant cone dystrophy: A novel pathogenic GUCA1A variant in COD.</title>
        <authorList>
            <person name="Tang S."/>
            <person name="Xia Y."/>
            <person name="Dai Y."/>
            <person name="Liu Y."/>
            <person name="Li J."/>
            <person name="Pan X."/>
            <person name="Chen P."/>
        </authorList>
    </citation>
    <scope>VARIANT COD3 GLY-144</scope>
    <scope>CHARACTERIZATION OF VARIANT COD3 GLY-144</scope>
</reference>
<reference key="25">
    <citation type="journal article" date="2019" name="Sci. Rep.">
        <title>Characterization of GUCA1A-associated dominant cone/cone-rod dystrophy: low prevalence among Japanese patients with inherited retinal dystrophies.</title>
        <authorList>
            <person name="Mizobuchi K."/>
            <person name="Hayashi T."/>
            <person name="Katagiri S."/>
            <person name="Yoshitake K."/>
            <person name="Fujinami K."/>
            <person name="Yang L."/>
            <person name="Kuniyoshi K."/>
            <person name="Shinoda K."/>
            <person name="Machida S."/>
            <person name="Kondo M."/>
            <person name="Ueno S."/>
            <person name="Terasaki H."/>
            <person name="Matsuura T."/>
            <person name="Tsunoda K."/>
            <person name="Iwata T."/>
            <person name="Nakano T."/>
        </authorList>
    </citation>
    <scope>VARIANTS COD3 ILE-42; GLU-68; ILE-80; ASN-99; SER-99; PHE-151 AND ARG-184</scope>
</reference>
<reference key="26">
    <citation type="journal article" date="2020" name="Int. J. Mol. Sci.">
        <title>Constitutive activation of guanylate cyclase by the G86R GCAP1 variant is due to 'locking' cation-pi interactions that impair the activator-to-inhibitor structural transition.</title>
        <authorList>
            <person name="Abbas S."/>
            <person name="Marino V."/>
            <person name="Bielefeld L."/>
            <person name="Koch K.W."/>
            <person name="Dell'Orco D."/>
        </authorList>
    </citation>
    <scope>CHARACTERIZATION OF VARIANT CORD14 ARG-86</scope>
</reference>
<sequence length="201" mass="22920">MGNVMEGKSVEELSSTECHQWYKKFMTECPSGQLTLYEFRQFFGLKNLSPSASQYVEQMFETFDFNKDGYIDFMEYVAALSLVLKGKVEQKLRWYFKLYDVDGNGCIDRDELLTIIQAIRAINPCSDTTMTAEEFTDTVFSKIDVNGDGELSLEEFIEGVQKDQMLLDTLTRSLDLTRIVRRLQNGEQDEEGADEAAEAAG</sequence>